<reference key="1">
    <citation type="submission" date="2006-10" db="EMBL/GenBank/DDBJ databases">
        <authorList>
            <person name="Fleischmann R.D."/>
            <person name="Dodson R.J."/>
            <person name="Haft D.H."/>
            <person name="Merkel J.S."/>
            <person name="Nelson W.C."/>
            <person name="Fraser C.M."/>
        </authorList>
    </citation>
    <scope>NUCLEOTIDE SEQUENCE [LARGE SCALE GENOMIC DNA]</scope>
    <source>
        <strain>104</strain>
    </source>
</reference>
<keyword id="KW-0456">Lyase</keyword>
<accession>A0QCA6</accession>
<feature type="chain" id="PRO_1000050420" description="Putative pterin-4-alpha-carbinolamine dehydratase">
    <location>
        <begin position="1"/>
        <end position="94"/>
    </location>
</feature>
<gene>
    <name type="ordered locus">MAV_1299</name>
</gene>
<evidence type="ECO:0000255" key="1">
    <source>
        <dbReference type="HAMAP-Rule" id="MF_00434"/>
    </source>
</evidence>
<sequence>MAVLTDEQIDAALPDLDGWERADGALRRSIKFPSFLDGIDAVRRVAEHAESKDHHPDIDIRWRTVTFALVTHSEGGITQNDVDMARDINGIVGS</sequence>
<name>PHS_MYCA1</name>
<dbReference type="EC" id="4.2.1.96" evidence="1"/>
<dbReference type="EMBL" id="CP000479">
    <property type="protein sequence ID" value="ABK67400.1"/>
    <property type="molecule type" value="Genomic_DNA"/>
</dbReference>
<dbReference type="RefSeq" id="WP_011724058.1">
    <property type="nucleotide sequence ID" value="NC_008595.1"/>
</dbReference>
<dbReference type="SMR" id="A0QCA6"/>
<dbReference type="KEGG" id="mav:MAV_1299"/>
<dbReference type="HOGENOM" id="CLU_081974_4_3_11"/>
<dbReference type="Proteomes" id="UP000001574">
    <property type="component" value="Chromosome"/>
</dbReference>
<dbReference type="GO" id="GO:0008124">
    <property type="term" value="F:4-alpha-hydroxytetrahydrobiopterin dehydratase activity"/>
    <property type="evidence" value="ECO:0007669"/>
    <property type="project" value="UniProtKB-UniRule"/>
</dbReference>
<dbReference type="GO" id="GO:0006729">
    <property type="term" value="P:tetrahydrobiopterin biosynthetic process"/>
    <property type="evidence" value="ECO:0007669"/>
    <property type="project" value="InterPro"/>
</dbReference>
<dbReference type="CDD" id="cd00488">
    <property type="entry name" value="PCD_DCoH"/>
    <property type="match status" value="1"/>
</dbReference>
<dbReference type="Gene3D" id="3.30.1360.20">
    <property type="entry name" value="Transcriptional coactivator/pterin dehydratase"/>
    <property type="match status" value="1"/>
</dbReference>
<dbReference type="HAMAP" id="MF_00434">
    <property type="entry name" value="Pterin_4_alpha"/>
    <property type="match status" value="1"/>
</dbReference>
<dbReference type="InterPro" id="IPR036428">
    <property type="entry name" value="PCD_sf"/>
</dbReference>
<dbReference type="InterPro" id="IPR001533">
    <property type="entry name" value="Pterin_deHydtase"/>
</dbReference>
<dbReference type="NCBIfam" id="NF002017">
    <property type="entry name" value="PRK00823.1-2"/>
    <property type="match status" value="1"/>
</dbReference>
<dbReference type="PANTHER" id="PTHR12599">
    <property type="entry name" value="PTERIN-4-ALPHA-CARBINOLAMINE DEHYDRATASE"/>
    <property type="match status" value="1"/>
</dbReference>
<dbReference type="PANTHER" id="PTHR12599:SF0">
    <property type="entry name" value="PTERIN-4-ALPHA-CARBINOLAMINE DEHYDRATASE"/>
    <property type="match status" value="1"/>
</dbReference>
<dbReference type="Pfam" id="PF01329">
    <property type="entry name" value="Pterin_4a"/>
    <property type="match status" value="1"/>
</dbReference>
<dbReference type="SUPFAM" id="SSF55248">
    <property type="entry name" value="PCD-like"/>
    <property type="match status" value="1"/>
</dbReference>
<organism>
    <name type="scientific">Mycobacterium avium (strain 104)</name>
    <dbReference type="NCBI Taxonomy" id="243243"/>
    <lineage>
        <taxon>Bacteria</taxon>
        <taxon>Bacillati</taxon>
        <taxon>Actinomycetota</taxon>
        <taxon>Actinomycetes</taxon>
        <taxon>Mycobacteriales</taxon>
        <taxon>Mycobacteriaceae</taxon>
        <taxon>Mycobacterium</taxon>
        <taxon>Mycobacterium avium complex (MAC)</taxon>
    </lineage>
</organism>
<proteinExistence type="inferred from homology"/>
<comment type="catalytic activity">
    <reaction evidence="1">
        <text>(4aS,6R)-4a-hydroxy-L-erythro-5,6,7,8-tetrahydrobiopterin = (6R)-L-erythro-6,7-dihydrobiopterin + H2O</text>
        <dbReference type="Rhea" id="RHEA:11920"/>
        <dbReference type="ChEBI" id="CHEBI:15377"/>
        <dbReference type="ChEBI" id="CHEBI:15642"/>
        <dbReference type="ChEBI" id="CHEBI:43120"/>
        <dbReference type="EC" id="4.2.1.96"/>
    </reaction>
</comment>
<comment type="similarity">
    <text evidence="1">Belongs to the pterin-4-alpha-carbinolamine dehydratase family.</text>
</comment>
<protein>
    <recommendedName>
        <fullName evidence="1">Putative pterin-4-alpha-carbinolamine dehydratase</fullName>
        <shortName evidence="1">PHS</shortName>
        <ecNumber evidence="1">4.2.1.96</ecNumber>
    </recommendedName>
    <alternativeName>
        <fullName evidence="1">4-alpha-hydroxy-tetrahydropterin dehydratase</fullName>
    </alternativeName>
    <alternativeName>
        <fullName evidence="1">Pterin carbinolamine dehydratase</fullName>
        <shortName evidence="1">PCD</shortName>
    </alternativeName>
</protein>